<organism>
    <name type="scientific">Prochlorococcus marinus subsp. pastoris (strain CCMP1986 / NIES-2087 / MED4)</name>
    <dbReference type="NCBI Taxonomy" id="59919"/>
    <lineage>
        <taxon>Bacteria</taxon>
        <taxon>Bacillati</taxon>
        <taxon>Cyanobacteriota</taxon>
        <taxon>Cyanophyceae</taxon>
        <taxon>Synechococcales</taxon>
        <taxon>Prochlorococcaceae</taxon>
        <taxon>Prochlorococcus</taxon>
    </lineage>
</organism>
<comment type="function">
    <text evidence="1">Catalyzes the attachment of serine to tRNA(Ser). Is also able to aminoacylate tRNA(Sec) with serine, to form the misacylated tRNA L-seryl-tRNA(Sec), which will be further converted into selenocysteinyl-tRNA(Sec).</text>
</comment>
<comment type="catalytic activity">
    <reaction evidence="1">
        <text>tRNA(Ser) + L-serine + ATP = L-seryl-tRNA(Ser) + AMP + diphosphate + H(+)</text>
        <dbReference type="Rhea" id="RHEA:12292"/>
        <dbReference type="Rhea" id="RHEA-COMP:9669"/>
        <dbReference type="Rhea" id="RHEA-COMP:9703"/>
        <dbReference type="ChEBI" id="CHEBI:15378"/>
        <dbReference type="ChEBI" id="CHEBI:30616"/>
        <dbReference type="ChEBI" id="CHEBI:33019"/>
        <dbReference type="ChEBI" id="CHEBI:33384"/>
        <dbReference type="ChEBI" id="CHEBI:78442"/>
        <dbReference type="ChEBI" id="CHEBI:78533"/>
        <dbReference type="ChEBI" id="CHEBI:456215"/>
        <dbReference type="EC" id="6.1.1.11"/>
    </reaction>
</comment>
<comment type="catalytic activity">
    <reaction evidence="1">
        <text>tRNA(Sec) + L-serine + ATP = L-seryl-tRNA(Sec) + AMP + diphosphate + H(+)</text>
        <dbReference type="Rhea" id="RHEA:42580"/>
        <dbReference type="Rhea" id="RHEA-COMP:9742"/>
        <dbReference type="Rhea" id="RHEA-COMP:10128"/>
        <dbReference type="ChEBI" id="CHEBI:15378"/>
        <dbReference type="ChEBI" id="CHEBI:30616"/>
        <dbReference type="ChEBI" id="CHEBI:33019"/>
        <dbReference type="ChEBI" id="CHEBI:33384"/>
        <dbReference type="ChEBI" id="CHEBI:78442"/>
        <dbReference type="ChEBI" id="CHEBI:78533"/>
        <dbReference type="ChEBI" id="CHEBI:456215"/>
        <dbReference type="EC" id="6.1.1.11"/>
    </reaction>
</comment>
<comment type="pathway">
    <text evidence="1">Aminoacyl-tRNA biosynthesis; selenocysteinyl-tRNA(Sec) biosynthesis; L-seryl-tRNA(Sec) from L-serine and tRNA(Sec): step 1/1.</text>
</comment>
<comment type="subunit">
    <text evidence="1">Homodimer. The tRNA molecule binds across the dimer.</text>
</comment>
<comment type="subcellular location">
    <subcellularLocation>
        <location evidence="1">Cytoplasm</location>
    </subcellularLocation>
</comment>
<comment type="domain">
    <text evidence="1">Consists of two distinct domains, a catalytic core and a N-terminal extension that is involved in tRNA binding.</text>
</comment>
<comment type="similarity">
    <text evidence="1">Belongs to the class-II aminoacyl-tRNA synthetase family. Type-1 seryl-tRNA synthetase subfamily.</text>
</comment>
<keyword id="KW-0030">Aminoacyl-tRNA synthetase</keyword>
<keyword id="KW-0067">ATP-binding</keyword>
<keyword id="KW-0963">Cytoplasm</keyword>
<keyword id="KW-0436">Ligase</keyword>
<keyword id="KW-0547">Nucleotide-binding</keyword>
<keyword id="KW-0648">Protein biosynthesis</keyword>
<gene>
    <name evidence="1" type="primary">serS</name>
    <name type="ordered locus">PMM1188</name>
</gene>
<name>SYS_PROMP</name>
<dbReference type="EC" id="6.1.1.11" evidence="1"/>
<dbReference type="EMBL" id="BX548174">
    <property type="protein sequence ID" value="CAE19647.1"/>
    <property type="molecule type" value="Genomic_DNA"/>
</dbReference>
<dbReference type="RefSeq" id="WP_011132822.1">
    <property type="nucleotide sequence ID" value="NC_005072.1"/>
</dbReference>
<dbReference type="SMR" id="Q7V0R7"/>
<dbReference type="STRING" id="59919.PMM1188"/>
<dbReference type="KEGG" id="pmm:PMM1188"/>
<dbReference type="eggNOG" id="COG0172">
    <property type="taxonomic scope" value="Bacteria"/>
</dbReference>
<dbReference type="HOGENOM" id="CLU_023797_1_1_3"/>
<dbReference type="OrthoDB" id="9804647at2"/>
<dbReference type="UniPathway" id="UPA00906">
    <property type="reaction ID" value="UER00895"/>
</dbReference>
<dbReference type="Proteomes" id="UP000001026">
    <property type="component" value="Chromosome"/>
</dbReference>
<dbReference type="GO" id="GO:0005737">
    <property type="term" value="C:cytoplasm"/>
    <property type="evidence" value="ECO:0007669"/>
    <property type="project" value="UniProtKB-SubCell"/>
</dbReference>
<dbReference type="GO" id="GO:0005524">
    <property type="term" value="F:ATP binding"/>
    <property type="evidence" value="ECO:0007669"/>
    <property type="project" value="UniProtKB-UniRule"/>
</dbReference>
<dbReference type="GO" id="GO:0004828">
    <property type="term" value="F:serine-tRNA ligase activity"/>
    <property type="evidence" value="ECO:0007669"/>
    <property type="project" value="UniProtKB-UniRule"/>
</dbReference>
<dbReference type="GO" id="GO:0016260">
    <property type="term" value="P:selenocysteine biosynthetic process"/>
    <property type="evidence" value="ECO:0007669"/>
    <property type="project" value="UniProtKB-UniRule"/>
</dbReference>
<dbReference type="GO" id="GO:0006434">
    <property type="term" value="P:seryl-tRNA aminoacylation"/>
    <property type="evidence" value="ECO:0007669"/>
    <property type="project" value="UniProtKB-UniRule"/>
</dbReference>
<dbReference type="CDD" id="cd00770">
    <property type="entry name" value="SerRS_core"/>
    <property type="match status" value="1"/>
</dbReference>
<dbReference type="Gene3D" id="3.30.930.10">
    <property type="entry name" value="Bira Bifunctional Protein, Domain 2"/>
    <property type="match status" value="1"/>
</dbReference>
<dbReference type="Gene3D" id="1.10.287.40">
    <property type="entry name" value="Serine-tRNA synthetase, tRNA binding domain"/>
    <property type="match status" value="1"/>
</dbReference>
<dbReference type="HAMAP" id="MF_00176">
    <property type="entry name" value="Ser_tRNA_synth_type1"/>
    <property type="match status" value="1"/>
</dbReference>
<dbReference type="InterPro" id="IPR002314">
    <property type="entry name" value="aa-tRNA-synt_IIb"/>
</dbReference>
<dbReference type="InterPro" id="IPR006195">
    <property type="entry name" value="aa-tRNA-synth_II"/>
</dbReference>
<dbReference type="InterPro" id="IPR045864">
    <property type="entry name" value="aa-tRNA-synth_II/BPL/LPL"/>
</dbReference>
<dbReference type="InterPro" id="IPR002317">
    <property type="entry name" value="Ser-tRNA-ligase_type_1"/>
</dbReference>
<dbReference type="InterPro" id="IPR015866">
    <property type="entry name" value="Ser-tRNA-synth_1_N"/>
</dbReference>
<dbReference type="InterPro" id="IPR042103">
    <property type="entry name" value="SerRS_1_N_sf"/>
</dbReference>
<dbReference type="InterPro" id="IPR033729">
    <property type="entry name" value="SerRS_core"/>
</dbReference>
<dbReference type="InterPro" id="IPR010978">
    <property type="entry name" value="tRNA-bd_arm"/>
</dbReference>
<dbReference type="NCBIfam" id="TIGR00414">
    <property type="entry name" value="serS"/>
    <property type="match status" value="1"/>
</dbReference>
<dbReference type="PANTHER" id="PTHR43697:SF1">
    <property type="entry name" value="SERINE--TRNA LIGASE"/>
    <property type="match status" value="1"/>
</dbReference>
<dbReference type="PANTHER" id="PTHR43697">
    <property type="entry name" value="SERYL-TRNA SYNTHETASE"/>
    <property type="match status" value="1"/>
</dbReference>
<dbReference type="Pfam" id="PF02403">
    <property type="entry name" value="Seryl_tRNA_N"/>
    <property type="match status" value="1"/>
</dbReference>
<dbReference type="Pfam" id="PF00587">
    <property type="entry name" value="tRNA-synt_2b"/>
    <property type="match status" value="1"/>
</dbReference>
<dbReference type="PIRSF" id="PIRSF001529">
    <property type="entry name" value="Ser-tRNA-synth_IIa"/>
    <property type="match status" value="1"/>
</dbReference>
<dbReference type="PRINTS" id="PR00981">
    <property type="entry name" value="TRNASYNTHSER"/>
</dbReference>
<dbReference type="SUPFAM" id="SSF55681">
    <property type="entry name" value="Class II aaRS and biotin synthetases"/>
    <property type="match status" value="1"/>
</dbReference>
<dbReference type="SUPFAM" id="SSF46589">
    <property type="entry name" value="tRNA-binding arm"/>
    <property type="match status" value="1"/>
</dbReference>
<dbReference type="PROSITE" id="PS50862">
    <property type="entry name" value="AA_TRNA_LIGASE_II"/>
    <property type="match status" value="1"/>
</dbReference>
<reference key="1">
    <citation type="journal article" date="2003" name="Nature">
        <title>Genome divergence in two Prochlorococcus ecotypes reflects oceanic niche differentiation.</title>
        <authorList>
            <person name="Rocap G."/>
            <person name="Larimer F.W."/>
            <person name="Lamerdin J.E."/>
            <person name="Malfatti S."/>
            <person name="Chain P."/>
            <person name="Ahlgren N.A."/>
            <person name="Arellano A."/>
            <person name="Coleman M."/>
            <person name="Hauser L."/>
            <person name="Hess W.R."/>
            <person name="Johnson Z.I."/>
            <person name="Land M.L."/>
            <person name="Lindell D."/>
            <person name="Post A.F."/>
            <person name="Regala W."/>
            <person name="Shah M."/>
            <person name="Shaw S.L."/>
            <person name="Steglich C."/>
            <person name="Sullivan M.B."/>
            <person name="Ting C.S."/>
            <person name="Tolonen A."/>
            <person name="Webb E.A."/>
            <person name="Zinser E.R."/>
            <person name="Chisholm S.W."/>
        </authorList>
    </citation>
    <scope>NUCLEOTIDE SEQUENCE [LARGE SCALE GENOMIC DNA]</scope>
    <source>
        <strain>CCMP1986 / NIES-2087 / MED4</strain>
    </source>
</reference>
<sequence>MLDQKLIRENPTFVEDNLSLRGKVYDIARIRELSLERKEIDTEISSLQSESKKLSKIIGQEIRNSNINSKELNELKDKGNKYRIKVSEFEEQKRILDKQLQDEISKLPNLPSKDAPLGENENNNIQIKEWGDPLTKDNLKAHWEIGENLNLFDSVKSTKISKSRFITLTGNGARLERALVNFMLDVHSNNGYLELMPPALVNSESLQGSGQLPKFSNESFKCANDDLWLSPTAEVPLTAFHKNEIIDPKILPLKYVAYSPCFRREAGSYGRDTKGLIRLHQFNKVELYWFCHPNKSLEAHKEITADAESILKKLNLPYRSVDICTGDLGFSSSRTFDLEVWLPSSQCYREISSCSNCLDFQARRSSIRTKIDKKTSYIHTLNGSGLAIGRTMAAILENGQQLDGSVKIPDALVPYFGSSFIKTT</sequence>
<evidence type="ECO:0000255" key="1">
    <source>
        <dbReference type="HAMAP-Rule" id="MF_00176"/>
    </source>
</evidence>
<proteinExistence type="inferred from homology"/>
<feature type="chain" id="PRO_0000122100" description="Serine--tRNA ligase">
    <location>
        <begin position="1"/>
        <end position="424"/>
    </location>
</feature>
<feature type="binding site" evidence="1">
    <location>
        <begin position="232"/>
        <end position="234"/>
    </location>
    <ligand>
        <name>L-serine</name>
        <dbReference type="ChEBI" id="CHEBI:33384"/>
    </ligand>
</feature>
<feature type="binding site" evidence="1">
    <location>
        <begin position="263"/>
        <end position="265"/>
    </location>
    <ligand>
        <name>ATP</name>
        <dbReference type="ChEBI" id="CHEBI:30616"/>
    </ligand>
</feature>
<feature type="binding site" evidence="1">
    <location>
        <position position="286"/>
    </location>
    <ligand>
        <name>L-serine</name>
        <dbReference type="ChEBI" id="CHEBI:33384"/>
    </ligand>
</feature>
<feature type="binding site" evidence="1">
    <location>
        <begin position="350"/>
        <end position="353"/>
    </location>
    <ligand>
        <name>ATP</name>
        <dbReference type="ChEBI" id="CHEBI:30616"/>
    </ligand>
</feature>
<feature type="binding site" evidence="1">
    <location>
        <position position="384"/>
    </location>
    <ligand>
        <name>L-serine</name>
        <dbReference type="ChEBI" id="CHEBI:33384"/>
    </ligand>
</feature>
<protein>
    <recommendedName>
        <fullName evidence="1">Serine--tRNA ligase</fullName>
        <ecNumber evidence="1">6.1.1.11</ecNumber>
    </recommendedName>
    <alternativeName>
        <fullName evidence="1">Seryl-tRNA synthetase</fullName>
        <shortName evidence="1">SerRS</shortName>
    </alternativeName>
    <alternativeName>
        <fullName evidence="1">Seryl-tRNA(Ser/Sec) synthetase</fullName>
    </alternativeName>
</protein>
<accession>Q7V0R7</accession>